<comment type="function">
    <text evidence="5">Acts as a UDP-D-xylose 4-epimerase but lacks both UDP-D-glucose and UDP-D-glucuronic acid 4-epimerase activities in vitro.</text>
</comment>
<comment type="catalytic activity">
    <reaction evidence="5">
        <text>UDP-beta-L-arabinopyranose = UDP-alpha-D-xylose</text>
        <dbReference type="Rhea" id="RHEA:11320"/>
        <dbReference type="ChEBI" id="CHEBI:57632"/>
        <dbReference type="ChEBI" id="CHEBI:61457"/>
        <dbReference type="EC" id="5.1.3.5"/>
    </reaction>
</comment>
<comment type="cofactor">
    <cofactor evidence="2">
        <name>NAD(+)</name>
        <dbReference type="ChEBI" id="CHEBI:57540"/>
    </cofactor>
</comment>
<comment type="pathway">
    <text evidence="8">Nucleotide-sugar biosynthesis; UDP-L-arabinose biosynthesis; UDP-L-arabinose from UDP-alpha-D-xylose: step 1/1.</text>
</comment>
<comment type="pathway">
    <text evidence="7">Cell wall biogenesis; cell wall polysaccharide biosynthesis.</text>
</comment>
<comment type="subcellular location">
    <subcellularLocation>
        <location evidence="5">Golgi apparatus</location>
        <location evidence="5">Golgi stack membrane</location>
        <topology evidence="3">Single-pass type II membrane protein</topology>
    </subcellularLocation>
</comment>
<comment type="alternative products">
    <event type="alternative splicing"/>
    <isoform>
        <id>Q9SA77-1</id>
        <name>1</name>
        <sequence type="displayed"/>
    </isoform>
    <text>A number of isoforms are produced. According to EST sequences.</text>
</comment>
<comment type="tissue specificity">
    <text evidence="5">High expression in roots. Also found in leaves, stems, flowers, and siliques.</text>
</comment>
<comment type="similarity">
    <text evidence="7">Belongs to the NAD(P)-dependent epimerase/dehydratase family.</text>
</comment>
<comment type="sequence caution" evidence="7">
    <conflict type="erroneous initiation">
        <sequence resource="EMBL-CDS" id="BAD94059"/>
    </conflict>
</comment>
<proteinExistence type="evidence at protein level"/>
<accession>Q9SA77</accession>
<accession>Q570B0</accession>
<accession>Q8H7B9</accession>
<sequence>MFSFGRARSQGRQNRSMSLGGLDYADPKKKNNYLGKILLTASLTALCIFMLKQSPTFNTPSVFSRHEPGVTHVLVTGGAGYIGSHAALRLLKESYRVTIVDNLSRGNLAAVRILQELFPEPGRLQFIYADLGDAKAVNKIFTENAFDAVMHFAAVAYVGESTQFPLKYYHNITSNTLVVLETMAAHGVKTLIYSSTCATYGEPDIMPITEETPQVPINPYGKAKKMAEDIILDFSKNSDMAVMILRYFNVIGSDPEGRLGEAPRPELREHGRISGACFDAARGIMPGLQIKGTDYKTADGTCVRDYIDVTDLVDAHVKALQKAKPRKVGIYNVGTGKGSSVKEFVEACKKATGVEIKIDYLPRRAGDYAEVYSDPSKIRKELNWTAKHTNLKESLETAWRWQKLHRNGYGLTTSSVSVY</sequence>
<keyword id="KW-0025">Alternative splicing</keyword>
<keyword id="KW-0119">Carbohydrate metabolism</keyword>
<keyword id="KW-0333">Golgi apparatus</keyword>
<keyword id="KW-0413">Isomerase</keyword>
<keyword id="KW-0472">Membrane</keyword>
<keyword id="KW-0520">NAD</keyword>
<keyword id="KW-1185">Reference proteome</keyword>
<keyword id="KW-0735">Signal-anchor</keyword>
<keyword id="KW-0812">Transmembrane</keyword>
<keyword id="KW-1133">Transmembrane helix</keyword>
<reference key="1">
    <citation type="journal article" date="2003" name="Plant Cell">
        <title>The biosynthesis of L-arabinose in plants: molecular cloning and characterization of a Golgi-localized UDP-D-xylose 4-epimerase encoded by the MUR4 gene of Arabidopsis.</title>
        <authorList>
            <person name="Burget E.G."/>
            <person name="Verma R."/>
            <person name="Moelhoej M."/>
            <person name="Reiter W.-D."/>
        </authorList>
    </citation>
    <scope>NUCLEOTIDE SEQUENCE [MRNA]</scope>
    <scope>FUNCTION</scope>
    <scope>CATALYTIC ACTIVITY</scope>
    <scope>SUBCELLULAR LOCATION</scope>
    <scope>TISSUE SPECIFICITY</scope>
    <scope>MUTANTS MUR4-1 AND MUR4-3</scope>
</reference>
<reference key="2">
    <citation type="submission" date="1998-08" db="EMBL/GenBank/DDBJ databases">
        <title>Signal peptide selection derived cDNAs from Arabidopsis thaliana leaves and guard cells.</title>
        <authorList>
            <person name="Stracke R."/>
            <person name="Palme K."/>
        </authorList>
    </citation>
    <scope>NUCLEOTIDE SEQUENCE [LARGE SCALE MRNA]</scope>
</reference>
<reference key="3">
    <citation type="journal article" date="2000" name="Nature">
        <title>Sequence and analysis of chromosome 1 of the plant Arabidopsis thaliana.</title>
        <authorList>
            <person name="Theologis A."/>
            <person name="Ecker J.R."/>
            <person name="Palm C.J."/>
            <person name="Federspiel N.A."/>
            <person name="Kaul S."/>
            <person name="White O."/>
            <person name="Alonso J."/>
            <person name="Altafi H."/>
            <person name="Araujo R."/>
            <person name="Bowman C.L."/>
            <person name="Brooks S.Y."/>
            <person name="Buehler E."/>
            <person name="Chan A."/>
            <person name="Chao Q."/>
            <person name="Chen H."/>
            <person name="Cheuk R.F."/>
            <person name="Chin C.W."/>
            <person name="Chung M.K."/>
            <person name="Conn L."/>
            <person name="Conway A.B."/>
            <person name="Conway A.R."/>
            <person name="Creasy T.H."/>
            <person name="Dewar K."/>
            <person name="Dunn P."/>
            <person name="Etgu P."/>
            <person name="Feldblyum T.V."/>
            <person name="Feng J.-D."/>
            <person name="Fong B."/>
            <person name="Fujii C.Y."/>
            <person name="Gill J.E."/>
            <person name="Goldsmith A.D."/>
            <person name="Haas B."/>
            <person name="Hansen N.F."/>
            <person name="Hughes B."/>
            <person name="Huizar L."/>
            <person name="Hunter J.L."/>
            <person name="Jenkins J."/>
            <person name="Johnson-Hopson C."/>
            <person name="Khan S."/>
            <person name="Khaykin E."/>
            <person name="Kim C.J."/>
            <person name="Koo H.L."/>
            <person name="Kremenetskaia I."/>
            <person name="Kurtz D.B."/>
            <person name="Kwan A."/>
            <person name="Lam B."/>
            <person name="Langin-Hooper S."/>
            <person name="Lee A."/>
            <person name="Lee J.M."/>
            <person name="Lenz C.A."/>
            <person name="Li J.H."/>
            <person name="Li Y.-P."/>
            <person name="Lin X."/>
            <person name="Liu S.X."/>
            <person name="Liu Z.A."/>
            <person name="Luros J.S."/>
            <person name="Maiti R."/>
            <person name="Marziali A."/>
            <person name="Militscher J."/>
            <person name="Miranda M."/>
            <person name="Nguyen M."/>
            <person name="Nierman W.C."/>
            <person name="Osborne B.I."/>
            <person name="Pai G."/>
            <person name="Peterson J."/>
            <person name="Pham P.K."/>
            <person name="Rizzo M."/>
            <person name="Rooney T."/>
            <person name="Rowley D."/>
            <person name="Sakano H."/>
            <person name="Salzberg S.L."/>
            <person name="Schwartz J.R."/>
            <person name="Shinn P."/>
            <person name="Southwick A.M."/>
            <person name="Sun H."/>
            <person name="Tallon L.J."/>
            <person name="Tambunga G."/>
            <person name="Toriumi M.J."/>
            <person name="Town C.D."/>
            <person name="Utterback T."/>
            <person name="Van Aken S."/>
            <person name="Vaysberg M."/>
            <person name="Vysotskaia V.S."/>
            <person name="Walker M."/>
            <person name="Wu D."/>
            <person name="Yu G."/>
            <person name="Fraser C.M."/>
            <person name="Venter J.C."/>
            <person name="Davis R.W."/>
        </authorList>
    </citation>
    <scope>NUCLEOTIDE SEQUENCE [LARGE SCALE GENOMIC DNA]</scope>
    <source>
        <strain>cv. Columbia</strain>
    </source>
</reference>
<reference key="4">
    <citation type="journal article" date="2017" name="Plant J.">
        <title>Araport11: a complete reannotation of the Arabidopsis thaliana reference genome.</title>
        <authorList>
            <person name="Cheng C.Y."/>
            <person name="Krishnakumar V."/>
            <person name="Chan A.P."/>
            <person name="Thibaud-Nissen F."/>
            <person name="Schobel S."/>
            <person name="Town C.D."/>
        </authorList>
    </citation>
    <scope>GENOME REANNOTATION</scope>
    <source>
        <strain>cv. Columbia</strain>
    </source>
</reference>
<reference key="5">
    <citation type="journal article" date="2003" name="Science">
        <title>Empirical analysis of transcriptional activity in the Arabidopsis genome.</title>
        <authorList>
            <person name="Yamada K."/>
            <person name="Lim J."/>
            <person name="Dale J.M."/>
            <person name="Chen H."/>
            <person name="Shinn P."/>
            <person name="Palm C.J."/>
            <person name="Southwick A.M."/>
            <person name="Wu H.C."/>
            <person name="Kim C.J."/>
            <person name="Nguyen M."/>
            <person name="Pham P.K."/>
            <person name="Cheuk R.F."/>
            <person name="Karlin-Newmann G."/>
            <person name="Liu S.X."/>
            <person name="Lam B."/>
            <person name="Sakano H."/>
            <person name="Wu T."/>
            <person name="Yu G."/>
            <person name="Miranda M."/>
            <person name="Quach H.L."/>
            <person name="Tripp M."/>
            <person name="Chang C.H."/>
            <person name="Lee J.M."/>
            <person name="Toriumi M.J."/>
            <person name="Chan M.M."/>
            <person name="Tang C.C."/>
            <person name="Onodera C.S."/>
            <person name="Deng J.M."/>
            <person name="Akiyama K."/>
            <person name="Ansari Y."/>
            <person name="Arakawa T."/>
            <person name="Banh J."/>
            <person name="Banno F."/>
            <person name="Bowser L."/>
            <person name="Brooks S.Y."/>
            <person name="Carninci P."/>
            <person name="Chao Q."/>
            <person name="Choy N."/>
            <person name="Enju A."/>
            <person name="Goldsmith A.D."/>
            <person name="Gurjal M."/>
            <person name="Hansen N.F."/>
            <person name="Hayashizaki Y."/>
            <person name="Johnson-Hopson C."/>
            <person name="Hsuan V.W."/>
            <person name="Iida K."/>
            <person name="Karnes M."/>
            <person name="Khan S."/>
            <person name="Koesema E."/>
            <person name="Ishida J."/>
            <person name="Jiang P.X."/>
            <person name="Jones T."/>
            <person name="Kawai J."/>
            <person name="Kamiya A."/>
            <person name="Meyers C."/>
            <person name="Nakajima M."/>
            <person name="Narusaka M."/>
            <person name="Seki M."/>
            <person name="Sakurai T."/>
            <person name="Satou M."/>
            <person name="Tamse R."/>
            <person name="Vaysberg M."/>
            <person name="Wallender E.K."/>
            <person name="Wong C."/>
            <person name="Yamamura Y."/>
            <person name="Yuan S."/>
            <person name="Shinozaki K."/>
            <person name="Davis R.W."/>
            <person name="Theologis A."/>
            <person name="Ecker J.R."/>
        </authorList>
    </citation>
    <scope>NUCLEOTIDE SEQUENCE [LARGE SCALE MRNA]</scope>
    <source>
        <strain>cv. Columbia</strain>
    </source>
</reference>
<reference key="6">
    <citation type="submission" date="2005-03" db="EMBL/GenBank/DDBJ databases">
        <title>Large-scale analysis of RIKEN Arabidopsis full-length (RAFL) cDNAs.</title>
        <authorList>
            <person name="Totoki Y."/>
            <person name="Seki M."/>
            <person name="Ishida J."/>
            <person name="Nakajima M."/>
            <person name="Enju A."/>
            <person name="Kamiya A."/>
            <person name="Narusaka M."/>
            <person name="Shin-i T."/>
            <person name="Nakagawa M."/>
            <person name="Sakamoto N."/>
            <person name="Oishi K."/>
            <person name="Kohara Y."/>
            <person name="Kobayashi M."/>
            <person name="Toyoda A."/>
            <person name="Sakaki Y."/>
            <person name="Sakurai T."/>
            <person name="Iida K."/>
            <person name="Akiyama K."/>
            <person name="Satou M."/>
            <person name="Toyoda T."/>
            <person name="Konagaya A."/>
            <person name="Carninci P."/>
            <person name="Kawai J."/>
            <person name="Hayashizaki Y."/>
            <person name="Shinozaki K."/>
        </authorList>
    </citation>
    <scope>NUCLEOTIDE SEQUENCE [LARGE SCALE MRNA] OF 175-419</scope>
    <source>
        <strain>cv. Columbia</strain>
    </source>
</reference>
<dbReference type="EC" id="5.1.3.5" evidence="5"/>
<dbReference type="EMBL" id="AY195742">
    <property type="protein sequence ID" value="AAO39213.1"/>
    <property type="molecule type" value="mRNA"/>
</dbReference>
<dbReference type="EMBL" id="AF083751">
    <property type="protein sequence ID" value="AAN60309.1"/>
    <property type="molecule type" value="mRNA"/>
</dbReference>
<dbReference type="EMBL" id="AC007060">
    <property type="protein sequence ID" value="AAD25749.1"/>
    <property type="molecule type" value="Genomic_DNA"/>
</dbReference>
<dbReference type="EMBL" id="CP002684">
    <property type="protein sequence ID" value="AEE31251.1"/>
    <property type="molecule type" value="Genomic_DNA"/>
</dbReference>
<dbReference type="EMBL" id="CP002684">
    <property type="protein sequence ID" value="AEE31252.1"/>
    <property type="molecule type" value="Genomic_DNA"/>
</dbReference>
<dbReference type="EMBL" id="CP002684">
    <property type="protein sequence ID" value="ANM59489.1"/>
    <property type="molecule type" value="Genomic_DNA"/>
</dbReference>
<dbReference type="EMBL" id="CP002684">
    <property type="protein sequence ID" value="ANM59490.1"/>
    <property type="molecule type" value="Genomic_DNA"/>
</dbReference>
<dbReference type="EMBL" id="AY064973">
    <property type="protein sequence ID" value="AAL57628.1"/>
    <property type="molecule type" value="mRNA"/>
</dbReference>
<dbReference type="EMBL" id="BT002614">
    <property type="protein sequence ID" value="AAO11530.1"/>
    <property type="molecule type" value="mRNA"/>
</dbReference>
<dbReference type="EMBL" id="AF325108">
    <property type="protein sequence ID" value="AAK17176.1"/>
    <property type="molecule type" value="mRNA"/>
</dbReference>
<dbReference type="EMBL" id="AK220800">
    <property type="protein sequence ID" value="BAD94059.1"/>
    <property type="status" value="ALT_INIT"/>
    <property type="molecule type" value="mRNA"/>
</dbReference>
<dbReference type="PIR" id="E86431">
    <property type="entry name" value="E86431"/>
</dbReference>
<dbReference type="RefSeq" id="NP_001319115.1">
    <molecule id="Q9SA77-1"/>
    <property type="nucleotide sequence ID" value="NM_001332913.1"/>
</dbReference>
<dbReference type="RefSeq" id="NP_001321844.1">
    <molecule id="Q9SA77-1"/>
    <property type="nucleotide sequence ID" value="NM_001332916.1"/>
</dbReference>
<dbReference type="RefSeq" id="NP_001321845.1">
    <molecule id="Q9SA77-1"/>
    <property type="nucleotide sequence ID" value="NM_001332914.1"/>
</dbReference>
<dbReference type="RefSeq" id="NP_174350.2">
    <molecule id="Q9SA77-1"/>
    <property type="nucleotide sequence ID" value="NM_102799.6"/>
</dbReference>
<dbReference type="SMR" id="Q9SA77"/>
<dbReference type="BioGRID" id="25177">
    <property type="interactions" value="2"/>
</dbReference>
<dbReference type="FunCoup" id="Q9SA77">
    <property type="interactions" value="152"/>
</dbReference>
<dbReference type="STRING" id="3702.Q9SA77"/>
<dbReference type="iPTMnet" id="Q9SA77"/>
<dbReference type="PaxDb" id="3702-AT1G30620.1"/>
<dbReference type="ProteomicsDB" id="244458">
    <molecule id="Q9SA77-1"/>
</dbReference>
<dbReference type="EnsemblPlants" id="AT1G30620.1">
    <molecule id="Q9SA77-1"/>
    <property type="protein sequence ID" value="AT1G30620.1"/>
    <property type="gene ID" value="AT1G30620"/>
</dbReference>
<dbReference type="EnsemblPlants" id="AT1G30620.2">
    <molecule id="Q9SA77-1"/>
    <property type="protein sequence ID" value="AT1G30620.2"/>
    <property type="gene ID" value="AT1G30620"/>
</dbReference>
<dbReference type="EnsemblPlants" id="AT1G30620.4">
    <molecule id="Q9SA77-1"/>
    <property type="protein sequence ID" value="AT1G30620.4"/>
    <property type="gene ID" value="AT1G30620"/>
</dbReference>
<dbReference type="EnsemblPlants" id="AT1G30620.6">
    <molecule id="Q9SA77-1"/>
    <property type="protein sequence ID" value="AT1G30620.6"/>
    <property type="gene ID" value="AT1G30620"/>
</dbReference>
<dbReference type="GeneID" id="839942"/>
<dbReference type="Gramene" id="AT1G30620.1">
    <molecule id="Q9SA77-1"/>
    <property type="protein sequence ID" value="AT1G30620.1"/>
    <property type="gene ID" value="AT1G30620"/>
</dbReference>
<dbReference type="Gramene" id="AT1G30620.2">
    <molecule id="Q9SA77-1"/>
    <property type="protein sequence ID" value="AT1G30620.2"/>
    <property type="gene ID" value="AT1G30620"/>
</dbReference>
<dbReference type="Gramene" id="AT1G30620.4">
    <molecule id="Q9SA77-1"/>
    <property type="protein sequence ID" value="AT1G30620.4"/>
    <property type="gene ID" value="AT1G30620"/>
</dbReference>
<dbReference type="Gramene" id="AT1G30620.6">
    <molecule id="Q9SA77-1"/>
    <property type="protein sequence ID" value="AT1G30620.6"/>
    <property type="gene ID" value="AT1G30620"/>
</dbReference>
<dbReference type="KEGG" id="ath:AT1G30620"/>
<dbReference type="Araport" id="AT1G30620"/>
<dbReference type="TAIR" id="AT1G30620">
    <property type="gene designation" value="MUR4"/>
</dbReference>
<dbReference type="eggNOG" id="KOG1371">
    <property type="taxonomic scope" value="Eukaryota"/>
</dbReference>
<dbReference type="InParanoid" id="Q9SA77"/>
<dbReference type="OMA" id="HFAAHTI"/>
<dbReference type="OrthoDB" id="9402762at2759"/>
<dbReference type="PhylomeDB" id="Q9SA77"/>
<dbReference type="BioCyc" id="ARA:AT1G30620-MONOMER"/>
<dbReference type="BioCyc" id="MetaCyc:AT1G30620-MONOMER"/>
<dbReference type="BRENDA" id="5.1.3.5">
    <property type="organism ID" value="399"/>
</dbReference>
<dbReference type="UniPathway" id="UPA00797">
    <property type="reaction ID" value="UER00772"/>
</dbReference>
<dbReference type="UniPathway" id="UPA00963"/>
<dbReference type="PRO" id="PR:Q9SA77"/>
<dbReference type="Proteomes" id="UP000006548">
    <property type="component" value="Chromosome 1"/>
</dbReference>
<dbReference type="ExpressionAtlas" id="Q9SA77">
    <property type="expression patterns" value="baseline and differential"/>
</dbReference>
<dbReference type="GO" id="GO:0005794">
    <property type="term" value="C:Golgi apparatus"/>
    <property type="evidence" value="ECO:0000314"/>
    <property type="project" value="TAIR"/>
</dbReference>
<dbReference type="GO" id="GO:0032580">
    <property type="term" value="C:Golgi cisterna membrane"/>
    <property type="evidence" value="ECO:0007669"/>
    <property type="project" value="UniProtKB-SubCell"/>
</dbReference>
<dbReference type="GO" id="GO:0000138">
    <property type="term" value="C:Golgi trans cisterna"/>
    <property type="evidence" value="ECO:0007005"/>
    <property type="project" value="TAIR"/>
</dbReference>
<dbReference type="GO" id="GO:0050373">
    <property type="term" value="F:UDP-arabinose 4-epimerase activity"/>
    <property type="evidence" value="ECO:0000314"/>
    <property type="project" value="TAIR"/>
</dbReference>
<dbReference type="GO" id="GO:0003978">
    <property type="term" value="F:UDP-glucose 4-epimerase activity"/>
    <property type="evidence" value="ECO:0007669"/>
    <property type="project" value="InterPro"/>
</dbReference>
<dbReference type="GO" id="GO:0019567">
    <property type="term" value="P:arabinose biosynthetic process"/>
    <property type="evidence" value="ECO:0000315"/>
    <property type="project" value="TAIR"/>
</dbReference>
<dbReference type="GO" id="GO:0045227">
    <property type="term" value="P:capsule polysaccharide biosynthetic process"/>
    <property type="evidence" value="ECO:0007669"/>
    <property type="project" value="UniProtKB-UniPathway"/>
</dbReference>
<dbReference type="GO" id="GO:0006012">
    <property type="term" value="P:galactose metabolic process"/>
    <property type="evidence" value="ECO:0007669"/>
    <property type="project" value="InterPro"/>
</dbReference>
<dbReference type="GO" id="GO:0009832">
    <property type="term" value="P:plant-type cell wall biogenesis"/>
    <property type="evidence" value="ECO:0000315"/>
    <property type="project" value="TAIR"/>
</dbReference>
<dbReference type="GO" id="GO:0033358">
    <property type="term" value="P:UDP-L-arabinose biosynthetic process"/>
    <property type="evidence" value="ECO:0007669"/>
    <property type="project" value="UniProtKB-UniPathway"/>
</dbReference>
<dbReference type="CDD" id="cd05247">
    <property type="entry name" value="UDP_G4E_1_SDR_e"/>
    <property type="match status" value="1"/>
</dbReference>
<dbReference type="Gene3D" id="3.40.50.720">
    <property type="entry name" value="NAD(P)-binding Rossmann-like Domain"/>
    <property type="match status" value="1"/>
</dbReference>
<dbReference type="Gene3D" id="3.90.25.10">
    <property type="entry name" value="UDP-galactose 4-epimerase, domain 1"/>
    <property type="match status" value="1"/>
</dbReference>
<dbReference type="InterPro" id="IPR016040">
    <property type="entry name" value="NAD(P)-bd_dom"/>
</dbReference>
<dbReference type="InterPro" id="IPR036291">
    <property type="entry name" value="NAD(P)-bd_dom_sf"/>
</dbReference>
<dbReference type="InterPro" id="IPR005886">
    <property type="entry name" value="UDP_G4E"/>
</dbReference>
<dbReference type="NCBIfam" id="TIGR01179">
    <property type="entry name" value="galE"/>
    <property type="match status" value="1"/>
</dbReference>
<dbReference type="PANTHER" id="PTHR43725:SF53">
    <property type="entry name" value="UDP-ARABINOSE 4-EPIMERASE 1"/>
    <property type="match status" value="1"/>
</dbReference>
<dbReference type="PANTHER" id="PTHR43725">
    <property type="entry name" value="UDP-GLUCOSE 4-EPIMERASE"/>
    <property type="match status" value="1"/>
</dbReference>
<dbReference type="Pfam" id="PF16363">
    <property type="entry name" value="GDP_Man_Dehyd"/>
    <property type="match status" value="1"/>
</dbReference>
<dbReference type="SUPFAM" id="SSF51735">
    <property type="entry name" value="NAD(P)-binding Rossmann-fold domains"/>
    <property type="match status" value="1"/>
</dbReference>
<organism>
    <name type="scientific">Arabidopsis thaliana</name>
    <name type="common">Mouse-ear cress</name>
    <dbReference type="NCBI Taxonomy" id="3702"/>
    <lineage>
        <taxon>Eukaryota</taxon>
        <taxon>Viridiplantae</taxon>
        <taxon>Streptophyta</taxon>
        <taxon>Embryophyta</taxon>
        <taxon>Tracheophyta</taxon>
        <taxon>Spermatophyta</taxon>
        <taxon>Magnoliopsida</taxon>
        <taxon>eudicotyledons</taxon>
        <taxon>Gunneridae</taxon>
        <taxon>Pentapetalae</taxon>
        <taxon>rosids</taxon>
        <taxon>malvids</taxon>
        <taxon>Brassicales</taxon>
        <taxon>Brassicaceae</taxon>
        <taxon>Camelineae</taxon>
        <taxon>Arabidopsis</taxon>
    </lineage>
</organism>
<evidence type="ECO:0000250" key="1"/>
<evidence type="ECO:0000250" key="2">
    <source>
        <dbReference type="UniProtKB" id="Q14376"/>
    </source>
</evidence>
<evidence type="ECO:0000255" key="3"/>
<evidence type="ECO:0000256" key="4">
    <source>
        <dbReference type="SAM" id="MobiDB-lite"/>
    </source>
</evidence>
<evidence type="ECO:0000269" key="5">
    <source>
    </source>
</evidence>
<evidence type="ECO:0000303" key="6">
    <source>
    </source>
</evidence>
<evidence type="ECO:0000305" key="7"/>
<evidence type="ECO:0000305" key="8">
    <source>
    </source>
</evidence>
<evidence type="ECO:0000312" key="9">
    <source>
        <dbReference type="Araport" id="AT1G30620"/>
    </source>
</evidence>
<evidence type="ECO:0000312" key="10">
    <source>
        <dbReference type="EMBL" id="AAD25749.1"/>
    </source>
</evidence>
<name>ARAE1_ARATH</name>
<feature type="chain" id="PRO_0000183229" description="UDP-arabinose 4-epimerase 1">
    <location>
        <begin position="1"/>
        <end position="419"/>
    </location>
</feature>
<feature type="topological domain" description="Cytoplasmic" evidence="3">
    <location>
        <begin position="1"/>
        <end position="32"/>
    </location>
</feature>
<feature type="transmembrane region" description="Helical; Signal-anchor for type II membrane protein" evidence="3">
    <location>
        <begin position="33"/>
        <end position="51"/>
    </location>
</feature>
<feature type="topological domain" description="Lumenal" evidence="3">
    <location>
        <begin position="52"/>
        <end position="419"/>
    </location>
</feature>
<feature type="region of interest" description="Disordered" evidence="4">
    <location>
        <begin position="1"/>
        <end position="21"/>
    </location>
</feature>
<feature type="active site" description="Proton acceptor" evidence="2">
    <location>
        <position position="220"/>
    </location>
</feature>
<feature type="binding site" evidence="1">
    <location>
        <begin position="72"/>
        <end position="103"/>
    </location>
    <ligand>
        <name>NAD(+)</name>
        <dbReference type="ChEBI" id="CHEBI:57540"/>
    </ligand>
</feature>
<feature type="mutagenesis site" description="In mur4-1; 50% reduction in L-Ara in cell wall material." evidence="5">
    <original>G</original>
    <variation>D</variation>
    <location>
        <position position="275"/>
    </location>
</feature>
<feature type="mutagenesis site" description="In mur4-3; 50% reduction in L-Ara in cell wall material." evidence="5">
    <original>R</original>
    <variation>Q</variation>
    <location>
        <position position="304"/>
    </location>
</feature>
<feature type="sequence conflict" description="In Ref. 2; AAN60309." evidence="7" ref="2">
    <original>V</original>
    <variation>G</variation>
    <location>
        <position position="155"/>
    </location>
</feature>
<protein>
    <recommendedName>
        <fullName evidence="7">UDP-arabinose 4-epimerase 1</fullName>
        <ecNumber evidence="5">5.1.3.5</ecNumber>
    </recommendedName>
    <alternativeName>
        <fullName evidence="7">UDP-D-xylose 4-epimerase 1</fullName>
    </alternativeName>
</protein>
<gene>
    <name evidence="6" type="primary">MUR4</name>
    <name evidence="9" type="ordered locus">At1g30620</name>
    <name evidence="10" type="ORF">T5I8.7</name>
</gene>